<keyword id="KW-0002">3D-structure</keyword>
<keyword id="KW-0024">Alternative initiation</keyword>
<keyword id="KW-0903">Direct protein sequencing</keyword>
<keyword id="KW-0238">DNA-binding</keyword>
<keyword id="KW-0479">Metal-binding</keyword>
<keyword id="KW-0539">Nucleus</keyword>
<keyword id="KW-0597">Phosphoprotein</keyword>
<keyword id="KW-1185">Reference proteome</keyword>
<keyword id="KW-0677">Repeat</keyword>
<keyword id="KW-0690">Ribosome biogenesis</keyword>
<keyword id="KW-0694">RNA-binding</keyword>
<keyword id="KW-0804">Transcription</keyword>
<keyword id="KW-0805">Transcription regulation</keyword>
<keyword id="KW-0862">Zinc</keyword>
<keyword id="KW-0863">Zinc-finger</keyword>
<dbReference type="EMBL" id="K02938">
    <property type="protein sequence ID" value="AAA49967.1"/>
    <property type="molecule type" value="mRNA"/>
</dbReference>
<dbReference type="EMBL" id="X03681">
    <property type="protein sequence ID" value="CAB51745.1"/>
    <property type="molecule type" value="Genomic_DNA"/>
</dbReference>
<dbReference type="EMBL" id="X03735">
    <property type="protein sequence ID" value="CAB51745.1"/>
    <property type="status" value="JOINED"/>
    <property type="molecule type" value="Genomic_DNA"/>
</dbReference>
<dbReference type="EMBL" id="X03736">
    <property type="protein sequence ID" value="CAB51745.1"/>
    <property type="status" value="JOINED"/>
    <property type="molecule type" value="Genomic_DNA"/>
</dbReference>
<dbReference type="EMBL" id="X03737">
    <property type="protein sequence ID" value="CAB51745.1"/>
    <property type="status" value="JOINED"/>
    <property type="molecule type" value="Genomic_DNA"/>
</dbReference>
<dbReference type="EMBL" id="X03738">
    <property type="protein sequence ID" value="CAB51745.1"/>
    <property type="status" value="JOINED"/>
    <property type="molecule type" value="Genomic_DNA"/>
</dbReference>
<dbReference type="EMBL" id="X03739">
    <property type="protein sequence ID" value="CAB51745.1"/>
    <property type="status" value="JOINED"/>
    <property type="molecule type" value="Genomic_DNA"/>
</dbReference>
<dbReference type="EMBL" id="X15785">
    <property type="protein sequence ID" value="CAA33786.1"/>
    <property type="molecule type" value="Genomic_DNA"/>
</dbReference>
<dbReference type="PIR" id="A35916">
    <property type="entry name" value="A35916"/>
</dbReference>
<dbReference type="PIR" id="A90857">
    <property type="entry name" value="TWXL3"/>
</dbReference>
<dbReference type="RefSeq" id="NP_001081328.1">
    <molecule id="P03001-2"/>
    <property type="nucleotide sequence ID" value="NM_001087859.1"/>
</dbReference>
<dbReference type="PDB" id="1TF3">
    <property type="method" value="NMR"/>
    <property type="chains" value="A=32-123"/>
</dbReference>
<dbReference type="PDB" id="1TF6">
    <property type="method" value="X-ray"/>
    <property type="resolution" value="3.10 A"/>
    <property type="chains" value="A/D=23-212"/>
</dbReference>
<dbReference type="PDB" id="1UN6">
    <property type="method" value="X-ray"/>
    <property type="resolution" value="3.10 A"/>
    <property type="chains" value="B/C/D=127-212"/>
</dbReference>
<dbReference type="PDB" id="2HGH">
    <property type="method" value="NMR"/>
    <property type="chains" value="A=127-212"/>
</dbReference>
<dbReference type="PDB" id="2J7J">
    <property type="method" value="X-ray"/>
    <property type="resolution" value="1.65 A"/>
    <property type="chains" value="A=127-210"/>
</dbReference>
<dbReference type="PDBsum" id="1TF3"/>
<dbReference type="PDBsum" id="1TF6"/>
<dbReference type="PDBsum" id="1UN6"/>
<dbReference type="PDBsum" id="2HGH"/>
<dbReference type="PDBsum" id="2J7J"/>
<dbReference type="SMR" id="P03001"/>
<dbReference type="BioGRID" id="99116">
    <property type="interactions" value="2"/>
</dbReference>
<dbReference type="iPTMnet" id="P03001"/>
<dbReference type="DNASU" id="397777"/>
<dbReference type="GeneID" id="397777"/>
<dbReference type="KEGG" id="xla:397777"/>
<dbReference type="AGR" id="Xenbase:XB-GENE-6252591"/>
<dbReference type="CTD" id="397777"/>
<dbReference type="Xenbase" id="XB-GENE-6252591">
    <property type="gene designation" value="gtf3a.L"/>
</dbReference>
<dbReference type="OrthoDB" id="2687452at2759"/>
<dbReference type="EvolutionaryTrace" id="P03001"/>
<dbReference type="Proteomes" id="UP000186698">
    <property type="component" value="Chromosome 2L"/>
</dbReference>
<dbReference type="Bgee" id="397777">
    <property type="expression patterns" value="Expressed in ovary and 19 other cell types or tissues"/>
</dbReference>
<dbReference type="GO" id="GO:0005634">
    <property type="term" value="C:nucleus"/>
    <property type="evidence" value="ECO:0000318"/>
    <property type="project" value="GO_Central"/>
</dbReference>
<dbReference type="GO" id="GO:0003677">
    <property type="term" value="F:DNA binding"/>
    <property type="evidence" value="ECO:0007669"/>
    <property type="project" value="UniProtKB-KW"/>
</dbReference>
<dbReference type="GO" id="GO:0003723">
    <property type="term" value="F:RNA binding"/>
    <property type="evidence" value="ECO:0007669"/>
    <property type="project" value="UniProtKB-KW"/>
</dbReference>
<dbReference type="GO" id="GO:0008270">
    <property type="term" value="F:zinc ion binding"/>
    <property type="evidence" value="ECO:0007669"/>
    <property type="project" value="UniProtKB-KW"/>
</dbReference>
<dbReference type="GO" id="GO:0042273">
    <property type="term" value="P:ribosomal large subunit biogenesis"/>
    <property type="evidence" value="ECO:0000250"/>
    <property type="project" value="UniProtKB"/>
</dbReference>
<dbReference type="FunFam" id="3.30.160.60:FF:001572">
    <property type="entry name" value="General transcription factor IIIA"/>
    <property type="match status" value="1"/>
</dbReference>
<dbReference type="FunFam" id="3.30.160.60:FF:001102">
    <property type="entry name" value="Transcription factor IIIA"/>
    <property type="match status" value="2"/>
</dbReference>
<dbReference type="FunFam" id="3.30.160.60:FF:001347">
    <property type="entry name" value="Transcription factor IIIA"/>
    <property type="match status" value="1"/>
</dbReference>
<dbReference type="FunFam" id="3.30.160.60:FF:001998">
    <property type="entry name" value="Transcription factor IIIA"/>
    <property type="match status" value="1"/>
</dbReference>
<dbReference type="FunFam" id="3.30.160.60:FF:003303">
    <property type="entry name" value="Transcription factor IIIA"/>
    <property type="match status" value="1"/>
</dbReference>
<dbReference type="FunFam" id="3.30.160.60:FF:004403">
    <property type="entry name" value="Transcription factor IIIA"/>
    <property type="match status" value="1"/>
</dbReference>
<dbReference type="Gene3D" id="3.30.160.60">
    <property type="entry name" value="Classic Zinc Finger"/>
    <property type="match status" value="9"/>
</dbReference>
<dbReference type="InterPro" id="IPR054599">
    <property type="entry name" value="TFIIIA_Zfn-C2H2"/>
</dbReference>
<dbReference type="InterPro" id="IPR051061">
    <property type="entry name" value="Zinc_finger_trans_reg"/>
</dbReference>
<dbReference type="InterPro" id="IPR036236">
    <property type="entry name" value="Znf_C2H2_sf"/>
</dbReference>
<dbReference type="InterPro" id="IPR013087">
    <property type="entry name" value="Znf_C2H2_type"/>
</dbReference>
<dbReference type="PANTHER" id="PTHR46179:SF1">
    <property type="entry name" value="TRANSCRIPTION FACTOR IIIA"/>
    <property type="match status" value="1"/>
</dbReference>
<dbReference type="PANTHER" id="PTHR46179">
    <property type="entry name" value="ZINC FINGER PROTEIN"/>
    <property type="match status" value="1"/>
</dbReference>
<dbReference type="Pfam" id="PF22110">
    <property type="entry name" value="TFIIIA_zf-C2H2"/>
    <property type="match status" value="1"/>
</dbReference>
<dbReference type="Pfam" id="PF00096">
    <property type="entry name" value="zf-C2H2"/>
    <property type="match status" value="6"/>
</dbReference>
<dbReference type="SMART" id="SM00355">
    <property type="entry name" value="ZnF_C2H2"/>
    <property type="match status" value="9"/>
</dbReference>
<dbReference type="SUPFAM" id="SSF57667">
    <property type="entry name" value="beta-beta-alpha zinc fingers"/>
    <property type="match status" value="6"/>
</dbReference>
<dbReference type="PROSITE" id="PS00028">
    <property type="entry name" value="ZINC_FINGER_C2H2_1"/>
    <property type="match status" value="8"/>
</dbReference>
<dbReference type="PROSITE" id="PS50157">
    <property type="entry name" value="ZINC_FINGER_C2H2_2"/>
    <property type="match status" value="7"/>
</dbReference>
<sequence>MAAKVASTSSEEAEGSLVTEGEMGEKALPVVYKRYICSFADCGAAYNKNWKLQAHLCKHTGEKPFPCKEEGCEKGFTSLHHLTRHSLTHTGEKNFTCDSDGCDLRFTTKANMKKHFNRFHNIKICVYVCHFENCGKAFKKHNQLKVHQFSHTQQLPYECPHEGCDKRFSLPSRLKRHEKVHAGYPCKKDDSCSFVGKTWTLYLKHVAECHQDLAVCDVCNRKFRHKDYLRDHQKTHEKERTVYLCPRDGCDRSYTTAFNLRSHIQSFHEEQRPFVCEHAGCGKCFAMKKSLERHSVVHDPEKRKLKEKCPRPKRSLASRLTGYIPPKSKEKNASVSGTEKTDSLVKNKPSGTETNGSLVLDKLTIQ</sequence>
<evidence type="ECO:0000250" key="1">
    <source>
        <dbReference type="UniProtKB" id="P17842"/>
    </source>
</evidence>
<evidence type="ECO:0000250" key="2">
    <source>
        <dbReference type="UniProtKB" id="Q92664"/>
    </source>
</evidence>
<evidence type="ECO:0000255" key="3">
    <source>
        <dbReference type="PROSITE-ProRule" id="PRU00042"/>
    </source>
</evidence>
<evidence type="ECO:0000256" key="4">
    <source>
        <dbReference type="SAM" id="MobiDB-lite"/>
    </source>
</evidence>
<evidence type="ECO:0000269" key="5">
    <source>
    </source>
</evidence>
<evidence type="ECO:0000269" key="6">
    <source>
    </source>
</evidence>
<evidence type="ECO:0000269" key="7">
    <source>
    </source>
</evidence>
<evidence type="ECO:0000269" key="8">
    <source>
    </source>
</evidence>
<evidence type="ECO:0000305" key="9"/>
<evidence type="ECO:0007829" key="10">
    <source>
        <dbReference type="PDB" id="1TF3"/>
    </source>
</evidence>
<evidence type="ECO:0007829" key="11">
    <source>
        <dbReference type="PDB" id="1TF6"/>
    </source>
</evidence>
<evidence type="ECO:0007829" key="12">
    <source>
        <dbReference type="PDB" id="2J7J"/>
    </source>
</evidence>
<reference key="1">
    <citation type="journal article" date="1984" name="Cell">
        <title>Xenopus 5S gene transcription factor, TFIIIA: characterization of a cDNA clone and measurement of RNA levels throughout development.</title>
        <authorList>
            <person name="Ginsberg A.M."/>
            <person name="King B.O."/>
            <person name="Roeder R.G."/>
        </authorList>
    </citation>
    <scope>NUCLEOTIDE SEQUENCE [MRNA] OF 23-366</scope>
</reference>
<reference key="2">
    <citation type="journal article" date="1986" name="Nucleic Acids Res.">
        <title>Structure of the gene for Xenopus transcription factor TFIIIA.</title>
        <authorList>
            <person name="Yun Tso J."/>
            <person name="van den Berg J."/>
            <person name="Korn L.J."/>
        </authorList>
    </citation>
    <scope>NUCLEOTIDE SEQUENCE [GENOMIC DNA] OF 23-366</scope>
</reference>
<reference key="3">
    <citation type="journal article" date="1986" name="Nucleic Acids Res.">
        <title>The developmental expression of the gene for TFIIIA in Xenopus laevis.</title>
        <authorList>
            <person name="Taylor W."/>
            <person name="Jackson I.J."/>
            <person name="Siegel N."/>
            <person name="Kumar A."/>
            <person name="Brown D.D."/>
        </authorList>
    </citation>
    <scope>NUCLEOTIDE SEQUENCE</scope>
    <scope>PROTEIN SEQUENCE OF 112-137</scope>
</reference>
<reference key="4">
    <citation type="journal article" date="1989" name="Genes Dev.">
        <title>Positive and negative regulation of the gene for transcription factor IIIA in Xenopus laevis oocytes.</title>
        <authorList>
            <person name="Scotto K.W."/>
            <person name="Kaulen H."/>
            <person name="Roeder R.G."/>
        </authorList>
    </citation>
    <scope>NUCLEOTIDE SEQUENCE [GENOMIC DNA] OF 1-35</scope>
</reference>
<reference key="5">
    <citation type="journal article" date="1990" name="Genes Dev.">
        <title>The characterization of the TFIIIA synthesized in somatic cells of Xenopus laevis.</title>
        <authorList>
            <person name="Kim S.H."/>
            <person name="Darby M.K."/>
            <person name="Joho K.E."/>
            <person name="Brown D.D."/>
        </authorList>
    </citation>
    <scope>NUCLEOTIDE SEQUENCE [MRNA] OF 1-26</scope>
    <scope>FUNCTION</scope>
</reference>
<reference key="6">
    <citation type="journal article" date="1992" name="J. Mol. Biol.">
        <title>Specific interaction of the first three zinc fingers of TFIIIA with the internal control region of the Xenopus 5 S RNA gene.</title>
        <authorList>
            <person name="Liao X.B."/>
            <person name="Clemens K.R."/>
            <person name="Tennant L."/>
            <person name="Wright P.E."/>
            <person name="Gottesfeld J.M."/>
        </authorList>
    </citation>
    <scope>NUCLEOTIDE SEQUENCE [MRNA] OF 23-123</scope>
    <scope>FUNCTION</scope>
</reference>
<reference key="7">
    <citation type="journal article" date="1991" name="Nucleic Acids Res.">
        <title>Structural elements in the N-terminal half of transcription factor IIIA required for factor binding to the 5S RNA gene internal control region.</title>
        <authorList>
            <person name="Smith J.F."/>
            <person name="Hawkins J."/>
            <person name="Leonard R.E."/>
            <person name="Hanas J.S."/>
        </authorList>
    </citation>
    <scope>FUNCTION</scope>
    <scope>MUTAGENESIS OF CYS-42; HIS-55; GLY-91; LYS-93; CYS-134 AND CYS-186</scope>
</reference>
<reference key="8">
    <citation type="journal article" date="2002" name="Biochem. J.">
        <title>Phosphorylation of Xenopus transcription factor IIIA by an oocyte protein kinase CK2.</title>
        <authorList>
            <person name="Westmark C.J."/>
            <person name="Ghose R."/>
            <person name="Huber P.W."/>
        </authorList>
    </citation>
    <scope>PHOSPHORYLATION AT SER-38 AND SER-336</scope>
    <scope>MUTAGENESIS OF SER-38; SER-336 AND SER-350</scope>
</reference>
<reference key="9">
    <citation type="journal article" date="1985" name="EMBO J.">
        <title>Repetitive zinc-binding domains in the protein transcription factor IIIA from Xenopus oocytes.</title>
        <authorList>
            <person name="Miller J."/>
            <person name="McLachlan A.D."/>
            <person name="Klug A."/>
        </authorList>
    </citation>
    <scope>REPEATS ANALYSIS</scope>
</reference>
<reference key="10">
    <citation type="journal article" date="1985" name="FEBS Lett.">
        <title>The primary structure of transcription factor TFIIIA has 12 consecutive repeats.</title>
        <authorList>
            <person name="Brown R.S."/>
            <person name="Sander C."/>
            <person name="Argos P."/>
        </authorList>
    </citation>
    <scope>REPEATS ANALYSIS</scope>
</reference>
<reference key="11">
    <citation type="journal article" date="1985" name="Studia Biophys.">
        <title>Multiple internal repeats within the structure of the 5S RNA/DNA binding transcription factor TF-IIIA from Xenopus laevis.</title>
        <authorList>
            <person name="Boehm S."/>
            <person name="Drescher B."/>
        </authorList>
    </citation>
    <scope>REPEATS ANALYSIS</scope>
</reference>
<reference key="12">
    <citation type="journal article" date="1997" name="Nat. Struct. Biol.">
        <title>Domain packing and dynamics in the DNA complex of the N-terminal zinc fingers of TFIIIA.</title>
        <authorList>
            <person name="Foster M.P."/>
            <person name="Wuttke D.S."/>
            <person name="Radhakrishnan I."/>
            <person name="Case D.A."/>
            <person name="Gottesfeld J.M."/>
            <person name="Wright P.E."/>
        </authorList>
    </citation>
    <scope>STRUCTURE BY NMR OF 10-101</scope>
</reference>
<reference key="13">
    <citation type="journal article" date="1998" name="Proc. Natl. Acad. Sci. U.S.A.">
        <title>Differing roles for zinc fingers in DNA recognition: structure of a six-finger transcription factor IIIA complex.</title>
        <authorList>
            <person name="Nolte R.T."/>
            <person name="Conlin R.M."/>
            <person name="Harrison S.C."/>
            <person name="Brown R.S."/>
        </authorList>
    </citation>
    <scope>X-RAY CRYSTALLOGRAPHY (3.1 ANGSTROMS) OF 32-210</scope>
</reference>
<feature type="chain" id="PRO_0000041632" description="Transcription factor IIIA">
    <location>
        <begin position="1"/>
        <end position="366"/>
    </location>
</feature>
<feature type="zinc finger region" description="C2H2-type 1" evidence="3">
    <location>
        <begin position="35"/>
        <end position="59"/>
    </location>
</feature>
<feature type="zinc finger region" description="C2H2-type 2" evidence="3">
    <location>
        <begin position="65"/>
        <end position="89"/>
    </location>
</feature>
<feature type="zinc finger region" description="C2H2-type 3" evidence="3">
    <location>
        <begin position="95"/>
        <end position="120"/>
    </location>
</feature>
<feature type="zinc finger region" description="C2H2-type 4" evidence="3">
    <location>
        <begin position="127"/>
        <end position="151"/>
    </location>
</feature>
<feature type="zinc finger region" description="C2H2-type 5" evidence="3">
    <location>
        <begin position="157"/>
        <end position="181"/>
    </location>
</feature>
<feature type="zinc finger region" description="C2H2-type 6" evidence="3">
    <location>
        <begin position="184"/>
        <end position="210"/>
    </location>
</feature>
<feature type="zinc finger region" description="C2H2-type 7" evidence="3">
    <location>
        <begin position="214"/>
        <end position="236"/>
    </location>
</feature>
<feature type="zinc finger region" description="C2H2-type 8" evidence="3">
    <location>
        <begin position="243"/>
        <end position="268"/>
    </location>
</feature>
<feature type="zinc finger region" description="C2H2-type 9" evidence="3">
    <location>
        <begin position="274"/>
        <end position="298"/>
    </location>
</feature>
<feature type="region of interest" description="Disordered" evidence="4">
    <location>
        <begin position="299"/>
        <end position="366"/>
    </location>
</feature>
<feature type="compositionally biased region" description="Basic and acidic residues" evidence="4">
    <location>
        <begin position="299"/>
        <end position="310"/>
    </location>
</feature>
<feature type="modified residue" description="Phosphoserine; by CK2" evidence="5">
    <location>
        <position position="38"/>
    </location>
</feature>
<feature type="modified residue" description="Phosphoserine; by CK2; in vitro" evidence="5">
    <location>
        <position position="336"/>
    </location>
</feature>
<feature type="splice variant" id="VSP_018962" description="In isoform Oocyte." evidence="9">
    <location>
        <begin position="1"/>
        <end position="22"/>
    </location>
</feature>
<feature type="sequence variant">
    <original>T</original>
    <variation>K</variation>
    <location>
        <position position="96"/>
    </location>
</feature>
<feature type="sequence variant">
    <original>R</original>
    <variation>C</variation>
    <location>
        <position position="319"/>
    </location>
</feature>
<feature type="sequence variant">
    <original>V</original>
    <variation>I</variation>
    <location>
        <position position="335"/>
    </location>
</feature>
<feature type="sequence variant">
    <original>G</original>
    <variation>D</variation>
    <location>
        <position position="356"/>
    </location>
</feature>
<feature type="sequence variant">
    <original>I</original>
    <variation>L</variation>
    <location>
        <position position="365"/>
    </location>
</feature>
<feature type="mutagenesis site" description="Abolishes phosphorylation by CK2." evidence="5">
    <original>S</original>
    <variation>E</variation>
    <variation>A</variation>
    <location>
        <position position="38"/>
    </location>
</feature>
<feature type="mutagenesis site" description="Loss of DNA binding." evidence="7">
    <original>C</original>
    <variation>S</variation>
    <location>
        <position position="42"/>
    </location>
</feature>
<feature type="mutagenesis site" description="Inhibition of specific DNA binding." evidence="7">
    <original>H</original>
    <variation>L</variation>
    <location>
        <position position="55"/>
    </location>
</feature>
<feature type="mutagenesis site" description="Loss of DNA binding." evidence="7">
    <original>G</original>
    <variation>S</variation>
    <location>
        <position position="91"/>
    </location>
</feature>
<feature type="mutagenesis site" description="Loss of DNA binding." evidence="7">
    <original>K</original>
    <variation>E</variation>
    <location>
        <position position="93"/>
    </location>
</feature>
<feature type="mutagenesis site" description="No effect." evidence="7">
    <original>C</original>
    <variation>S</variation>
    <location>
        <position position="134"/>
    </location>
</feature>
<feature type="mutagenesis site" description="No effect." evidence="7">
    <original>C</original>
    <variation>S</variation>
    <location>
        <position position="186"/>
    </location>
</feature>
<feature type="mutagenesis site" description="Slightly decreases phosphorylation by CK2." evidence="5">
    <original>S</original>
    <variation>E</variation>
    <variation>A</variation>
    <location>
        <position position="336"/>
    </location>
</feature>
<feature type="mutagenesis site" description="No effect on phosphorylation by CK2." evidence="5">
    <original>S</original>
    <variation>E</variation>
    <variation>A</variation>
    <location>
        <position position="350"/>
    </location>
</feature>
<feature type="sequence conflict" description="In Ref. 4; CAA33786." evidence="9" ref="4">
    <original>K</original>
    <variation>T</variation>
    <location>
        <position position="4"/>
    </location>
</feature>
<feature type="strand" evidence="11">
    <location>
        <begin position="38"/>
        <end position="41"/>
    </location>
</feature>
<feature type="strand" evidence="10">
    <location>
        <begin position="45"/>
        <end position="48"/>
    </location>
</feature>
<feature type="helix" evidence="11">
    <location>
        <begin position="49"/>
        <end position="60"/>
    </location>
</feature>
<feature type="strand" evidence="10">
    <location>
        <begin position="64"/>
        <end position="66"/>
    </location>
</feature>
<feature type="strand" evidence="10">
    <location>
        <begin position="75"/>
        <end position="78"/>
    </location>
</feature>
<feature type="helix" evidence="11">
    <location>
        <begin position="79"/>
        <end position="86"/>
    </location>
</feature>
<feature type="turn" evidence="11">
    <location>
        <begin position="87"/>
        <end position="91"/>
    </location>
</feature>
<feature type="strand" evidence="11">
    <location>
        <begin position="99"/>
        <end position="101"/>
    </location>
</feature>
<feature type="strand" evidence="11">
    <location>
        <begin position="105"/>
        <end position="107"/>
    </location>
</feature>
<feature type="helix" evidence="11">
    <location>
        <begin position="109"/>
        <end position="117"/>
    </location>
</feature>
<feature type="turn" evidence="11">
    <location>
        <begin position="122"/>
        <end position="124"/>
    </location>
</feature>
<feature type="strand" evidence="11">
    <location>
        <begin position="131"/>
        <end position="134"/>
    </location>
</feature>
<feature type="strand" evidence="12">
    <location>
        <begin position="137"/>
        <end position="140"/>
    </location>
</feature>
<feature type="helix" evidence="12">
    <location>
        <begin position="141"/>
        <end position="152"/>
    </location>
</feature>
<feature type="strand" evidence="11">
    <location>
        <begin position="156"/>
        <end position="158"/>
    </location>
</feature>
<feature type="strand" evidence="11">
    <location>
        <begin position="161"/>
        <end position="163"/>
    </location>
</feature>
<feature type="strand" evidence="12">
    <location>
        <begin position="167"/>
        <end position="170"/>
    </location>
</feature>
<feature type="helix" evidence="12">
    <location>
        <begin position="171"/>
        <end position="182"/>
    </location>
</feature>
<feature type="strand" evidence="12">
    <location>
        <begin position="183"/>
        <end position="185"/>
    </location>
</feature>
<feature type="turn" evidence="11">
    <location>
        <begin position="189"/>
        <end position="191"/>
    </location>
</feature>
<feature type="strand" evidence="12">
    <location>
        <begin position="195"/>
        <end position="198"/>
    </location>
</feature>
<feature type="helix" evidence="12">
    <location>
        <begin position="199"/>
        <end position="208"/>
    </location>
</feature>
<proteinExistence type="evidence at protein level"/>
<organism>
    <name type="scientific">Xenopus laevis</name>
    <name type="common">African clawed frog</name>
    <dbReference type="NCBI Taxonomy" id="8355"/>
    <lineage>
        <taxon>Eukaryota</taxon>
        <taxon>Metazoa</taxon>
        <taxon>Chordata</taxon>
        <taxon>Craniata</taxon>
        <taxon>Vertebrata</taxon>
        <taxon>Euteleostomi</taxon>
        <taxon>Amphibia</taxon>
        <taxon>Batrachia</taxon>
        <taxon>Anura</taxon>
        <taxon>Pipoidea</taxon>
        <taxon>Pipidae</taxon>
        <taxon>Xenopodinae</taxon>
        <taxon>Xenopus</taxon>
        <taxon>Xenopus</taxon>
    </lineage>
</organism>
<protein>
    <recommendedName>
        <fullName>Transcription factor IIIA</fullName>
        <shortName>TFIIIA</shortName>
    </recommendedName>
    <alternativeName>
        <fullName>S-TFIIIA/O-TFIIIA</fullName>
    </alternativeName>
</protein>
<accession>P03001</accession>
<accession>Q91856</accession>
<gene>
    <name type="primary">gtf3a</name>
</gene>
<comment type="function">
    <text evidence="1 2 6 7 8">Involved in ribosomal large subunit biogenesis (By similarity). Acts both as a positive transcription factor for 5S RNA genes, and as a specific RNA binding protein that complexes with 5S RNA in oocytes to form the 7S ribonucleoprotein storage particle. May play an essential role in the developmental change in 5S RNA gene expression. Interacts with the internal control region (ICR) of approximately 50 bases within the 5S RNA genes, is required for correct transcription of these genes by RNA polymerase III (PubMed:1538401, PubMed:1762917, PubMed:2253880). Also binds the transcribed 5S RNA's (By similarity).</text>
</comment>
<comment type="subcellular location">
    <subcellularLocation>
        <location>Nucleus</location>
    </subcellularLocation>
</comment>
<comment type="alternative products">
    <event type="alternative initiation"/>
    <isoform>
        <id>P03001-1</id>
        <name>Somatic</name>
        <name>S-TFIIIA</name>
        <sequence type="displayed"/>
    </isoform>
    <isoform>
        <id>P03001-2</id>
        <name>Oocyte</name>
        <name>O-TFIIIA</name>
        <sequence type="described" ref="VSP_018962"/>
    </isoform>
</comment>
<comment type="tissue specificity">
    <text>Synthesized in oocytes and, in much lower levels, in somatic cells.</text>
</comment>
<comment type="developmental stage">
    <text>The levels follow the transcriptional activity of oocyte type 5S RNA genes during embryogenesis, present in very high levels in maturing oocytes when oocyte type 5S genes are being expressed, and in much lower levels in somatic cells where the oocyte type genes are not expressed.</text>
</comment>
<comment type="PTM">
    <text>The N-terminus is blocked.</text>
</comment>
<name>TF3A_XENLA</name>